<gene>
    <name evidence="4" type="primary">xacH</name>
    <name evidence="7" type="synonym">tsgB7</name>
    <name evidence="7" type="ordered locus">HVO_B0035</name>
</gene>
<name>XACH_HALVD</name>
<protein>
    <recommendedName>
        <fullName evidence="5">Xylose/arabinose import permease protein XacH</fullName>
    </recommendedName>
</protein>
<organism>
    <name type="scientific">Haloferax volcanii (strain ATCC 29605 / DSM 3757 / JCM 8879 / NBRC 14742 / NCIMB 2012 / VKM B-1768 / DS2)</name>
    <name type="common">Halobacterium volcanii</name>
    <dbReference type="NCBI Taxonomy" id="309800"/>
    <lineage>
        <taxon>Archaea</taxon>
        <taxon>Methanobacteriati</taxon>
        <taxon>Methanobacteriota</taxon>
        <taxon>Stenosarchaea group</taxon>
        <taxon>Halobacteria</taxon>
        <taxon>Halobacteriales</taxon>
        <taxon>Haloferacaceae</taxon>
        <taxon>Haloferax</taxon>
    </lineage>
</organism>
<accession>D4GP36</accession>
<accession>L9VIH7</accession>
<evidence type="ECO:0000255" key="1"/>
<evidence type="ECO:0000255" key="2">
    <source>
        <dbReference type="PROSITE-ProRule" id="PRU00441"/>
    </source>
</evidence>
<evidence type="ECO:0000269" key="3">
    <source>
    </source>
</evidence>
<evidence type="ECO:0000303" key="4">
    <source>
    </source>
</evidence>
<evidence type="ECO:0000305" key="5"/>
<evidence type="ECO:0000305" key="6">
    <source>
    </source>
</evidence>
<evidence type="ECO:0000312" key="7">
    <source>
        <dbReference type="EMBL" id="ADE01289.1"/>
    </source>
</evidence>
<reference key="1">
    <citation type="journal article" date="2010" name="PLoS ONE">
        <title>The complete genome sequence of Haloferax volcanii DS2, a model archaeon.</title>
        <authorList>
            <person name="Hartman A.L."/>
            <person name="Norais C."/>
            <person name="Badger J.H."/>
            <person name="Delmas S."/>
            <person name="Haldenby S."/>
            <person name="Madupu R."/>
            <person name="Robinson J."/>
            <person name="Khouri H."/>
            <person name="Ren Q."/>
            <person name="Lowe T.M."/>
            <person name="Maupin-Furlow J."/>
            <person name="Pohlschroder M."/>
            <person name="Daniels C."/>
            <person name="Pfeiffer F."/>
            <person name="Allers T."/>
            <person name="Eisen J.A."/>
        </authorList>
    </citation>
    <scope>NUCLEOTIDE SEQUENCE [LARGE SCALE GENOMIC DNA]</scope>
    <source>
        <strain>ATCC 29605 / DSM 3757 / JCM 8879 / NBRC 14742 / NCIMB 2012 / VKM B-1768 / DS2</strain>
    </source>
</reference>
<reference key="2">
    <citation type="journal article" date="2019" name="FEMS Microbiol. Lett.">
        <title>Uptake of D-xylose and L-arabinose in Haloferax volcanii involves an ABC transporter of the CUT1 subfamily.</title>
        <authorList>
            <person name="Johnsen U."/>
            <person name="Ortjohann M."/>
            <person name="Sutter J.M."/>
            <person name="Geweke S."/>
            <person name="Schoenheit P."/>
        </authorList>
    </citation>
    <scope>FUNCTION</scope>
    <scope>SUBUNIT</scope>
    <scope>INDUCTION</scope>
    <source>
        <strain>DS2 / DS70 / H26</strain>
    </source>
</reference>
<feature type="chain" id="PRO_0000449391" description="Xylose/arabinose import permease protein XacH">
    <location>
        <begin position="1"/>
        <end position="317"/>
    </location>
</feature>
<feature type="transmembrane region" description="Helical" evidence="1">
    <location>
        <begin position="40"/>
        <end position="60"/>
    </location>
</feature>
<feature type="transmembrane region" description="Helical" evidence="1 2">
    <location>
        <begin position="98"/>
        <end position="118"/>
    </location>
</feature>
<feature type="transmembrane region" description="Helical" evidence="1 2">
    <location>
        <begin position="132"/>
        <end position="152"/>
    </location>
</feature>
<feature type="transmembrane region" description="Helical" evidence="1 2">
    <location>
        <begin position="179"/>
        <end position="199"/>
    </location>
</feature>
<feature type="transmembrane region" description="Helical" evidence="1 2">
    <location>
        <begin position="241"/>
        <end position="261"/>
    </location>
</feature>
<feature type="transmembrane region" description="Helical" evidence="1 2">
    <location>
        <begin position="290"/>
        <end position="310"/>
    </location>
</feature>
<feature type="domain" description="ABC transmembrane type-1" evidence="2">
    <location>
        <begin position="94"/>
        <end position="309"/>
    </location>
</feature>
<comment type="function">
    <text evidence="3 5">Part of the ABC transporter complex XacGHIJK involved in the uptake of xylose and arabinose (PubMed:31089701). Responsible for the translocation of the substrate across the membrane (Probable).</text>
</comment>
<comment type="subunit">
    <text evidence="6">The complex is composed of two ATP-binding proteins (XacJ and XacK), two transmembrane proteins (XacH and XacI) and a solute-binding protein (XacG).</text>
</comment>
<comment type="subcellular location">
    <subcellularLocation>
        <location evidence="5">Cell membrane</location>
        <topology evidence="1">Multi-pass membrane protein</topology>
    </subcellularLocation>
</comment>
<comment type="induction">
    <text evidence="3">Transcriptionally up-regulated by both L-arabinose and D-xylose via the pentose-specific regulator XacR.</text>
</comment>
<comment type="similarity">
    <text evidence="5">Belongs to the binding-protein-dependent transport system permease family.</text>
</comment>
<sequence length="317" mass="34995">MATHDNTEHVSDATDEAVGWESKLRYFLNSDFVRSAPYWGIPFVLMSIAVYGGTGYNFAISFTDYEGLGTPDYSTLDLEMYAQALSSDAFIAAAQNNLVLLVGFTTICLVLGLFLAILLDHGIRFSEKFQTVYLLPMSLSFVVTAQLWLWMFNVESGILNLVVTTLGFNPVDWLGNPSIALGAVILALIWQFSGYTMVVYLAGLQSIPDDQFEAARVDGASITRTYLRIIVPQLKEASVSAAVVLMVFALKAFTFLYALVGRYRPPNGTDILATLMVRRAFKFGEWAYSAAIATMLLIMALGVIGPYLYYQYKQGGL</sequence>
<proteinExistence type="evidence at protein level"/>
<keyword id="KW-1003">Cell membrane</keyword>
<keyword id="KW-0472">Membrane</keyword>
<keyword id="KW-0614">Plasmid</keyword>
<keyword id="KW-1185">Reference proteome</keyword>
<keyword id="KW-0762">Sugar transport</keyword>
<keyword id="KW-0812">Transmembrane</keyword>
<keyword id="KW-1133">Transmembrane helix</keyword>
<keyword id="KW-0813">Transport</keyword>
<dbReference type="EMBL" id="CP001953">
    <property type="protein sequence ID" value="ADE01289.1"/>
    <property type="molecule type" value="Genomic_DNA"/>
</dbReference>
<dbReference type="RefSeq" id="WP_004041120.1">
    <property type="nucleotide sequence ID" value="NC_013964.1"/>
</dbReference>
<dbReference type="SMR" id="D4GP36"/>
<dbReference type="TCDB" id="3.A.1.1.56">
    <property type="family name" value="the atp-binding cassette (abc) superfamily"/>
</dbReference>
<dbReference type="PaxDb" id="309800-C498_01585"/>
<dbReference type="EnsemblBacteria" id="ADE01289">
    <property type="protein sequence ID" value="ADE01289"/>
    <property type="gene ID" value="HVO_B0035"/>
</dbReference>
<dbReference type="GeneID" id="8919131"/>
<dbReference type="KEGG" id="hvo:HVO_B0035"/>
<dbReference type="PATRIC" id="fig|309800.29.peg.302"/>
<dbReference type="eggNOG" id="arCOG00157">
    <property type="taxonomic scope" value="Archaea"/>
</dbReference>
<dbReference type="HOGENOM" id="CLU_016047_0_0_2"/>
<dbReference type="OrthoDB" id="45815at2157"/>
<dbReference type="Proteomes" id="UP000008243">
    <property type="component" value="Plasmid pHV3"/>
</dbReference>
<dbReference type="GO" id="GO:0005886">
    <property type="term" value="C:plasma membrane"/>
    <property type="evidence" value="ECO:0007669"/>
    <property type="project" value="UniProtKB-SubCell"/>
</dbReference>
<dbReference type="GO" id="GO:0055085">
    <property type="term" value="P:transmembrane transport"/>
    <property type="evidence" value="ECO:0007669"/>
    <property type="project" value="InterPro"/>
</dbReference>
<dbReference type="CDD" id="cd06261">
    <property type="entry name" value="TM_PBP2"/>
    <property type="match status" value="1"/>
</dbReference>
<dbReference type="Gene3D" id="1.10.3720.10">
    <property type="entry name" value="MetI-like"/>
    <property type="match status" value="1"/>
</dbReference>
<dbReference type="InterPro" id="IPR051393">
    <property type="entry name" value="ABC_transporter_permease"/>
</dbReference>
<dbReference type="InterPro" id="IPR000515">
    <property type="entry name" value="MetI-like"/>
</dbReference>
<dbReference type="InterPro" id="IPR035906">
    <property type="entry name" value="MetI-like_sf"/>
</dbReference>
<dbReference type="PANTHER" id="PTHR30193">
    <property type="entry name" value="ABC TRANSPORTER PERMEASE PROTEIN"/>
    <property type="match status" value="1"/>
</dbReference>
<dbReference type="PANTHER" id="PTHR30193:SF42">
    <property type="entry name" value="ABC TRANSPORTER PERMEASE PROTEIN"/>
    <property type="match status" value="1"/>
</dbReference>
<dbReference type="Pfam" id="PF00528">
    <property type="entry name" value="BPD_transp_1"/>
    <property type="match status" value="1"/>
</dbReference>
<dbReference type="SUPFAM" id="SSF161098">
    <property type="entry name" value="MetI-like"/>
    <property type="match status" value="1"/>
</dbReference>
<dbReference type="PROSITE" id="PS50928">
    <property type="entry name" value="ABC_TM1"/>
    <property type="match status" value="1"/>
</dbReference>
<geneLocation type="plasmid">
    <name>pHV3</name>
</geneLocation>